<keyword id="KW-0030">Aminoacyl-tRNA synthetase</keyword>
<keyword id="KW-0067">ATP-binding</keyword>
<keyword id="KW-0963">Cytoplasm</keyword>
<keyword id="KW-0436">Ligase</keyword>
<keyword id="KW-0547">Nucleotide-binding</keyword>
<keyword id="KW-0648">Protein biosynthesis</keyword>
<gene>
    <name evidence="1" type="primary">gltX</name>
    <name type="ordered locus">PMM0473</name>
</gene>
<reference key="1">
    <citation type="journal article" date="2003" name="Nature">
        <title>Genome divergence in two Prochlorococcus ecotypes reflects oceanic niche differentiation.</title>
        <authorList>
            <person name="Rocap G."/>
            <person name="Larimer F.W."/>
            <person name="Lamerdin J.E."/>
            <person name="Malfatti S."/>
            <person name="Chain P."/>
            <person name="Ahlgren N.A."/>
            <person name="Arellano A."/>
            <person name="Coleman M."/>
            <person name="Hauser L."/>
            <person name="Hess W.R."/>
            <person name="Johnson Z.I."/>
            <person name="Land M.L."/>
            <person name="Lindell D."/>
            <person name="Post A.F."/>
            <person name="Regala W."/>
            <person name="Shah M."/>
            <person name="Shaw S.L."/>
            <person name="Steglich C."/>
            <person name="Sullivan M.B."/>
            <person name="Ting C.S."/>
            <person name="Tolonen A."/>
            <person name="Webb E.A."/>
            <person name="Zinser E.R."/>
            <person name="Chisholm S.W."/>
        </authorList>
    </citation>
    <scope>NUCLEOTIDE SEQUENCE [LARGE SCALE GENOMIC DNA]</scope>
    <source>
        <strain>CCMP1986 / NIES-2087 / MED4</strain>
    </source>
</reference>
<dbReference type="EC" id="6.1.1.17" evidence="1"/>
<dbReference type="EMBL" id="BX548174">
    <property type="protein sequence ID" value="CAE18932.1"/>
    <property type="molecule type" value="Genomic_DNA"/>
</dbReference>
<dbReference type="RefSeq" id="WP_011132109.1">
    <property type="nucleotide sequence ID" value="NC_005072.1"/>
</dbReference>
<dbReference type="SMR" id="Q7V2K3"/>
<dbReference type="STRING" id="59919.PMM0473"/>
<dbReference type="KEGG" id="pmm:PMM0473"/>
<dbReference type="eggNOG" id="COG0008">
    <property type="taxonomic scope" value="Bacteria"/>
</dbReference>
<dbReference type="HOGENOM" id="CLU_015768_6_0_3"/>
<dbReference type="OrthoDB" id="9807503at2"/>
<dbReference type="Proteomes" id="UP000001026">
    <property type="component" value="Chromosome"/>
</dbReference>
<dbReference type="GO" id="GO:0005829">
    <property type="term" value="C:cytosol"/>
    <property type="evidence" value="ECO:0007669"/>
    <property type="project" value="TreeGrafter"/>
</dbReference>
<dbReference type="GO" id="GO:0005524">
    <property type="term" value="F:ATP binding"/>
    <property type="evidence" value="ECO:0007669"/>
    <property type="project" value="UniProtKB-UniRule"/>
</dbReference>
<dbReference type="GO" id="GO:0004818">
    <property type="term" value="F:glutamate-tRNA ligase activity"/>
    <property type="evidence" value="ECO:0007669"/>
    <property type="project" value="UniProtKB-UniRule"/>
</dbReference>
<dbReference type="GO" id="GO:0000049">
    <property type="term" value="F:tRNA binding"/>
    <property type="evidence" value="ECO:0007669"/>
    <property type="project" value="InterPro"/>
</dbReference>
<dbReference type="GO" id="GO:0008270">
    <property type="term" value="F:zinc ion binding"/>
    <property type="evidence" value="ECO:0007669"/>
    <property type="project" value="InterPro"/>
</dbReference>
<dbReference type="GO" id="GO:0006424">
    <property type="term" value="P:glutamyl-tRNA aminoacylation"/>
    <property type="evidence" value="ECO:0007669"/>
    <property type="project" value="UniProtKB-UniRule"/>
</dbReference>
<dbReference type="CDD" id="cd00808">
    <property type="entry name" value="GluRS_core"/>
    <property type="match status" value="1"/>
</dbReference>
<dbReference type="FunFam" id="3.40.50.620:FF:000007">
    <property type="entry name" value="Glutamate--tRNA ligase"/>
    <property type="match status" value="1"/>
</dbReference>
<dbReference type="Gene3D" id="1.10.10.350">
    <property type="match status" value="1"/>
</dbReference>
<dbReference type="Gene3D" id="1.10.8.70">
    <property type="entry name" value="Glutamate-tRNA synthetase, class I, anticodon-binding domain 1"/>
    <property type="match status" value="1"/>
</dbReference>
<dbReference type="Gene3D" id="1.10.1160.10">
    <property type="entry name" value="Glutamyl-trna Synthetase, Domain 2"/>
    <property type="match status" value="1"/>
</dbReference>
<dbReference type="Gene3D" id="3.90.800.10">
    <property type="entry name" value="Glutamyl-tRNA Synthetase, Domain 3"/>
    <property type="match status" value="1"/>
</dbReference>
<dbReference type="Gene3D" id="3.40.50.620">
    <property type="entry name" value="HUPs"/>
    <property type="match status" value="1"/>
</dbReference>
<dbReference type="HAMAP" id="MF_00022">
    <property type="entry name" value="Glu_tRNA_synth_type1"/>
    <property type="match status" value="1"/>
</dbReference>
<dbReference type="InterPro" id="IPR045462">
    <property type="entry name" value="aa-tRNA-synth_I_cd-bd"/>
</dbReference>
<dbReference type="InterPro" id="IPR020751">
    <property type="entry name" value="aa-tRNA-synth_I_codon-bd_sub2"/>
</dbReference>
<dbReference type="InterPro" id="IPR001412">
    <property type="entry name" value="aa-tRNA-synth_I_CS"/>
</dbReference>
<dbReference type="InterPro" id="IPR008925">
    <property type="entry name" value="aa_tRNA-synth_I_cd-bd_sf"/>
</dbReference>
<dbReference type="InterPro" id="IPR004527">
    <property type="entry name" value="Glu-tRNA-ligase_bac/mito"/>
</dbReference>
<dbReference type="InterPro" id="IPR020752">
    <property type="entry name" value="Glu-tRNA-synth_I_codon-bd_sub1"/>
</dbReference>
<dbReference type="InterPro" id="IPR000924">
    <property type="entry name" value="Glu/Gln-tRNA-synth"/>
</dbReference>
<dbReference type="InterPro" id="IPR020058">
    <property type="entry name" value="Glu/Gln-tRNA-synth_Ib_cat-dom"/>
</dbReference>
<dbReference type="InterPro" id="IPR020061">
    <property type="entry name" value="Glu_tRNA_lig_a-bdl"/>
</dbReference>
<dbReference type="InterPro" id="IPR049940">
    <property type="entry name" value="GluQ/Sye"/>
</dbReference>
<dbReference type="InterPro" id="IPR033910">
    <property type="entry name" value="GluRS_core"/>
</dbReference>
<dbReference type="InterPro" id="IPR014729">
    <property type="entry name" value="Rossmann-like_a/b/a_fold"/>
</dbReference>
<dbReference type="NCBIfam" id="TIGR00464">
    <property type="entry name" value="gltX_bact"/>
    <property type="match status" value="1"/>
</dbReference>
<dbReference type="PANTHER" id="PTHR43311">
    <property type="entry name" value="GLUTAMATE--TRNA LIGASE"/>
    <property type="match status" value="1"/>
</dbReference>
<dbReference type="PANTHER" id="PTHR43311:SF2">
    <property type="entry name" value="GLUTAMATE--TRNA LIGASE, MITOCHONDRIAL-RELATED"/>
    <property type="match status" value="1"/>
</dbReference>
<dbReference type="Pfam" id="PF19269">
    <property type="entry name" value="Anticodon_2"/>
    <property type="match status" value="1"/>
</dbReference>
<dbReference type="Pfam" id="PF00749">
    <property type="entry name" value="tRNA-synt_1c"/>
    <property type="match status" value="1"/>
</dbReference>
<dbReference type="PRINTS" id="PR00987">
    <property type="entry name" value="TRNASYNTHGLU"/>
</dbReference>
<dbReference type="SUPFAM" id="SSF48163">
    <property type="entry name" value="An anticodon-binding domain of class I aminoacyl-tRNA synthetases"/>
    <property type="match status" value="1"/>
</dbReference>
<dbReference type="SUPFAM" id="SSF52374">
    <property type="entry name" value="Nucleotidylyl transferase"/>
    <property type="match status" value="1"/>
</dbReference>
<dbReference type="PROSITE" id="PS00178">
    <property type="entry name" value="AA_TRNA_LIGASE_I"/>
    <property type="match status" value="1"/>
</dbReference>
<comment type="function">
    <text evidence="1">Catalyzes the attachment of glutamate to tRNA(Glu) in a two-step reaction: glutamate is first activated by ATP to form Glu-AMP and then transferred to the acceptor end of tRNA(Glu).</text>
</comment>
<comment type="catalytic activity">
    <reaction evidence="1">
        <text>tRNA(Glu) + L-glutamate + ATP = L-glutamyl-tRNA(Glu) + AMP + diphosphate</text>
        <dbReference type="Rhea" id="RHEA:23540"/>
        <dbReference type="Rhea" id="RHEA-COMP:9663"/>
        <dbReference type="Rhea" id="RHEA-COMP:9680"/>
        <dbReference type="ChEBI" id="CHEBI:29985"/>
        <dbReference type="ChEBI" id="CHEBI:30616"/>
        <dbReference type="ChEBI" id="CHEBI:33019"/>
        <dbReference type="ChEBI" id="CHEBI:78442"/>
        <dbReference type="ChEBI" id="CHEBI:78520"/>
        <dbReference type="ChEBI" id="CHEBI:456215"/>
        <dbReference type="EC" id="6.1.1.17"/>
    </reaction>
</comment>
<comment type="subunit">
    <text evidence="1">Monomer.</text>
</comment>
<comment type="subcellular location">
    <subcellularLocation>
        <location evidence="1">Cytoplasm</location>
    </subcellularLocation>
</comment>
<comment type="similarity">
    <text evidence="1">Belongs to the class-I aminoacyl-tRNA synthetase family. Glutamate--tRNA ligase type 1 subfamily.</text>
</comment>
<accession>Q7V2K3</accession>
<organism>
    <name type="scientific">Prochlorococcus marinus subsp. pastoris (strain CCMP1986 / NIES-2087 / MED4)</name>
    <dbReference type="NCBI Taxonomy" id="59919"/>
    <lineage>
        <taxon>Bacteria</taxon>
        <taxon>Bacillati</taxon>
        <taxon>Cyanobacteriota</taxon>
        <taxon>Cyanophyceae</taxon>
        <taxon>Synechococcales</taxon>
        <taxon>Prochlorococcaceae</taxon>
        <taxon>Prochlorococcus</taxon>
    </lineage>
</organism>
<evidence type="ECO:0000255" key="1">
    <source>
        <dbReference type="HAMAP-Rule" id="MF_00022"/>
    </source>
</evidence>
<protein>
    <recommendedName>
        <fullName evidence="1">Glutamate--tRNA ligase</fullName>
        <ecNumber evidence="1">6.1.1.17</ecNumber>
    </recommendedName>
    <alternativeName>
        <fullName evidence="1">Glutamyl-tRNA synthetase</fullName>
        <shortName evidence="1">GluRS</shortName>
    </alternativeName>
</protein>
<sequence>MEKHLRLAPSPTGLLHIGTARTALFNWLYARKINGKFLIRIEDTDIVRSKSEYTTNILNGLNWLGLNWDEEPINQSKRVSVHKNYIKRLLESGAAYRCFTSESEILDLREKQKKSGLPPKHDNRHRNLTRKEIKEFISQGKSSVIRFKIDEETEIKWEDQIRGEIKWQGKDLGGDLVLSRRALGDEIGNPLYNLAVVVDDNFMNITHVVRGEDHISNTAKQILIYKALNFKLPIFAHTPLILNSEGKKLSKRDSVTSIDEFKEMGYLPEALANYMAFLGWSIKSPESEILSLSEISKVFNLSDVNKAGAKFNWEKLNWINSQYIKKMELTQLCKFIKKYWEEMGWESPSSEWDLKLTNLIQDSMILLKDAIDQSKPFFILSQMKKEGEEFLESKKEVKESLKYILFYLKEANITKVNKDNAREIINKIIVNHSIKKGILMKSLRVAFFGCLSGPDLIQSWELFSENKIDIPLIERCFN</sequence>
<feature type="chain" id="PRO_0000119626" description="Glutamate--tRNA ligase">
    <location>
        <begin position="1"/>
        <end position="478"/>
    </location>
</feature>
<feature type="short sequence motif" description="'HIGH' region" evidence="1">
    <location>
        <begin position="9"/>
        <end position="19"/>
    </location>
</feature>
<feature type="short sequence motif" description="'KMSKS' region" evidence="1">
    <location>
        <begin position="248"/>
        <end position="252"/>
    </location>
</feature>
<feature type="binding site" evidence="1">
    <location>
        <position position="251"/>
    </location>
    <ligand>
        <name>ATP</name>
        <dbReference type="ChEBI" id="CHEBI:30616"/>
    </ligand>
</feature>
<name>SYE_PROMP</name>
<proteinExistence type="inferred from homology"/>